<proteinExistence type="inferred from homology"/>
<organism>
    <name type="scientific">Synechococcus sp. (strain CC9605)</name>
    <dbReference type="NCBI Taxonomy" id="110662"/>
    <lineage>
        <taxon>Bacteria</taxon>
        <taxon>Bacillati</taxon>
        <taxon>Cyanobacteriota</taxon>
        <taxon>Cyanophyceae</taxon>
        <taxon>Synechococcales</taxon>
        <taxon>Synechococcaceae</taxon>
        <taxon>Synechococcus</taxon>
    </lineage>
</organism>
<comment type="similarity">
    <text evidence="1">Belongs to the universal ribosomal protein uS2 family.</text>
</comment>
<comment type="sequence caution" evidence="2">
    <conflict type="erroneous initiation">
        <sequence resource="EMBL-CDS" id="ABB34977"/>
    </conflict>
</comment>
<evidence type="ECO:0000255" key="1">
    <source>
        <dbReference type="HAMAP-Rule" id="MF_00291"/>
    </source>
</evidence>
<evidence type="ECO:0000305" key="2"/>
<protein>
    <recommendedName>
        <fullName evidence="1">Small ribosomal subunit protein uS2</fullName>
    </recommendedName>
    <alternativeName>
        <fullName evidence="2">30S ribosomal protein S2</fullName>
    </alternativeName>
</protein>
<accession>Q3AKA5</accession>
<dbReference type="EMBL" id="CP000110">
    <property type="protein sequence ID" value="ABB34977.1"/>
    <property type="status" value="ALT_INIT"/>
    <property type="molecule type" value="Genomic_DNA"/>
</dbReference>
<dbReference type="RefSeq" id="WP_006850376.1">
    <property type="nucleotide sequence ID" value="NC_007516.1"/>
</dbReference>
<dbReference type="SMR" id="Q3AKA5"/>
<dbReference type="STRING" id="110662.Syncc9605_1222"/>
<dbReference type="KEGG" id="syd:Syncc9605_1222"/>
<dbReference type="eggNOG" id="COG0052">
    <property type="taxonomic scope" value="Bacteria"/>
</dbReference>
<dbReference type="HOGENOM" id="CLU_040318_1_2_3"/>
<dbReference type="OrthoDB" id="9808036at2"/>
<dbReference type="GO" id="GO:0022627">
    <property type="term" value="C:cytosolic small ribosomal subunit"/>
    <property type="evidence" value="ECO:0007669"/>
    <property type="project" value="TreeGrafter"/>
</dbReference>
<dbReference type="GO" id="GO:0003735">
    <property type="term" value="F:structural constituent of ribosome"/>
    <property type="evidence" value="ECO:0007669"/>
    <property type="project" value="InterPro"/>
</dbReference>
<dbReference type="GO" id="GO:0006412">
    <property type="term" value="P:translation"/>
    <property type="evidence" value="ECO:0007669"/>
    <property type="project" value="UniProtKB-UniRule"/>
</dbReference>
<dbReference type="CDD" id="cd01425">
    <property type="entry name" value="RPS2"/>
    <property type="match status" value="1"/>
</dbReference>
<dbReference type="FunFam" id="1.10.287.610:FF:000001">
    <property type="entry name" value="30S ribosomal protein S2"/>
    <property type="match status" value="1"/>
</dbReference>
<dbReference type="Gene3D" id="3.40.50.10490">
    <property type="entry name" value="Glucose-6-phosphate isomerase like protein, domain 1"/>
    <property type="match status" value="1"/>
</dbReference>
<dbReference type="Gene3D" id="1.10.287.610">
    <property type="entry name" value="Helix hairpin bin"/>
    <property type="match status" value="1"/>
</dbReference>
<dbReference type="HAMAP" id="MF_00291_B">
    <property type="entry name" value="Ribosomal_uS2_B"/>
    <property type="match status" value="1"/>
</dbReference>
<dbReference type="InterPro" id="IPR001865">
    <property type="entry name" value="Ribosomal_uS2"/>
</dbReference>
<dbReference type="InterPro" id="IPR005706">
    <property type="entry name" value="Ribosomal_uS2_bac/mit/plastid"/>
</dbReference>
<dbReference type="InterPro" id="IPR018130">
    <property type="entry name" value="Ribosomal_uS2_CS"/>
</dbReference>
<dbReference type="InterPro" id="IPR023591">
    <property type="entry name" value="Ribosomal_uS2_flav_dom_sf"/>
</dbReference>
<dbReference type="NCBIfam" id="TIGR01011">
    <property type="entry name" value="rpsB_bact"/>
    <property type="match status" value="1"/>
</dbReference>
<dbReference type="PANTHER" id="PTHR12534">
    <property type="entry name" value="30S RIBOSOMAL PROTEIN S2 PROKARYOTIC AND ORGANELLAR"/>
    <property type="match status" value="1"/>
</dbReference>
<dbReference type="PANTHER" id="PTHR12534:SF0">
    <property type="entry name" value="SMALL RIBOSOMAL SUBUNIT PROTEIN US2M"/>
    <property type="match status" value="1"/>
</dbReference>
<dbReference type="Pfam" id="PF00318">
    <property type="entry name" value="Ribosomal_S2"/>
    <property type="match status" value="1"/>
</dbReference>
<dbReference type="PRINTS" id="PR00395">
    <property type="entry name" value="RIBOSOMALS2"/>
</dbReference>
<dbReference type="SUPFAM" id="SSF52313">
    <property type="entry name" value="Ribosomal protein S2"/>
    <property type="match status" value="1"/>
</dbReference>
<dbReference type="PROSITE" id="PS00962">
    <property type="entry name" value="RIBOSOMAL_S2_1"/>
    <property type="match status" value="1"/>
</dbReference>
<gene>
    <name evidence="1" type="primary">rpsB</name>
    <name evidence="1" type="synonym">rps2</name>
    <name type="ordered locus">Syncc9605_1222</name>
</gene>
<sequence>MAVVTLAEMMEAGAHFGHQTRRWNPKMSRYIYCARNGVHIIDLVQTAVCMNNAYKWTRSAARSGKRFLFVGTKKQASEVVALEAARCGASYVNQRWLGGMLTNWTTMKARIDRLKDLERMESSGAIAMRPKKEGAVLRRELERLQKYLGGLKNMRRLPDVVVLVDQRRESNAVLEARKLDIPLVSMLDTNCDPDLCEVPIPCNDDAVRSVQLILGRLADAINEGRHGSNDQRGGDSEG</sequence>
<feature type="chain" id="PRO_0000352044" description="Small ribosomal subunit protein uS2">
    <location>
        <begin position="1"/>
        <end position="238"/>
    </location>
</feature>
<keyword id="KW-0687">Ribonucleoprotein</keyword>
<keyword id="KW-0689">Ribosomal protein</keyword>
<reference key="1">
    <citation type="submission" date="2005-07" db="EMBL/GenBank/DDBJ databases">
        <title>Complete sequence of Synechococcus sp. CC9605.</title>
        <authorList>
            <consortium name="US DOE Joint Genome Institute"/>
            <person name="Copeland A."/>
            <person name="Lucas S."/>
            <person name="Lapidus A."/>
            <person name="Barry K."/>
            <person name="Detter J.C."/>
            <person name="Glavina T."/>
            <person name="Hammon N."/>
            <person name="Israni S."/>
            <person name="Pitluck S."/>
            <person name="Schmutz J."/>
            <person name="Martinez M."/>
            <person name="Larimer F."/>
            <person name="Land M."/>
            <person name="Kyrpides N."/>
            <person name="Ivanova N."/>
            <person name="Richardson P."/>
        </authorList>
    </citation>
    <scope>NUCLEOTIDE SEQUENCE [LARGE SCALE GENOMIC DNA]</scope>
    <source>
        <strain>CC9605</strain>
    </source>
</reference>
<name>RS2_SYNSC</name>